<feature type="chain" id="PRO_0000215482" description="4-deoxy-L-threo-5-hexosulose-uronate ketol-isomerase 1">
    <location>
        <begin position="1"/>
        <end position="280"/>
    </location>
</feature>
<feature type="binding site" evidence="1">
    <location>
        <position position="198"/>
    </location>
    <ligand>
        <name>Zn(2+)</name>
        <dbReference type="ChEBI" id="CHEBI:29105"/>
    </ligand>
</feature>
<feature type="binding site" evidence="1">
    <location>
        <position position="200"/>
    </location>
    <ligand>
        <name>Zn(2+)</name>
        <dbReference type="ChEBI" id="CHEBI:29105"/>
    </ligand>
</feature>
<feature type="binding site" evidence="1">
    <location>
        <position position="205"/>
    </location>
    <ligand>
        <name>Zn(2+)</name>
        <dbReference type="ChEBI" id="CHEBI:29105"/>
    </ligand>
</feature>
<feature type="binding site" evidence="1">
    <location>
        <position position="247"/>
    </location>
    <ligand>
        <name>Zn(2+)</name>
        <dbReference type="ChEBI" id="CHEBI:29105"/>
    </ligand>
</feature>
<accession>Q8A2S4</accession>
<comment type="function">
    <text evidence="1">Catalyzes the isomerization of 5-dehydro-4-deoxy-D-glucuronate to 3-deoxy-D-glycero-2,5-hexodiulosonate.</text>
</comment>
<comment type="catalytic activity">
    <reaction>
        <text>5-dehydro-4-deoxy-D-glucuronate = 3-deoxy-D-glycero-2,5-hexodiulosonate</text>
        <dbReference type="Rhea" id="RHEA:23896"/>
        <dbReference type="ChEBI" id="CHEBI:17117"/>
        <dbReference type="ChEBI" id="CHEBI:29071"/>
        <dbReference type="EC" id="5.3.1.17"/>
    </reaction>
</comment>
<comment type="cofactor">
    <cofactor evidence="1">
        <name>Zn(2+)</name>
        <dbReference type="ChEBI" id="CHEBI:29105"/>
    </cofactor>
    <text evidence="1">Binds 1 zinc ion per subunit.</text>
</comment>
<comment type="pathway">
    <text>Glycan metabolism; pectin degradation; 2-dehydro-3-deoxy-D-gluconate from pectin: step 4/5.</text>
</comment>
<comment type="similarity">
    <text evidence="2">Belongs to the KduI family.</text>
</comment>
<sequence>MKTNYEIRYAAHPEDAKSYDTARIRRDFLIEKIFVPNEVNMVYSMYDRMVVGGALPVGEVLTLEAIDPLKAPFFLTRREMGIYNVGGPGVVKAGDAVFELDYKEALYLGSGDRVVTFESKDASNPAKFYFNSLTAHRNYPDRKVTKADAVVAEMGSLEGSNHRNINKMLVNQVLPTCQLQMGMTELAPGSVWNTMPAHVHSRRMEAYFYFEIPEEHAICHFMGEVDETRHVWMKGDQAVLSPEWSIHSAAATHNYTFIWGMGGENLDYGDQDFSLITDLK</sequence>
<gene>
    <name type="primary">kduI1</name>
    <name type="ordered locus">BT_3231</name>
</gene>
<proteinExistence type="inferred from homology"/>
<evidence type="ECO:0000250" key="1"/>
<evidence type="ECO:0000305" key="2"/>
<protein>
    <recommendedName>
        <fullName>4-deoxy-L-threo-5-hexosulose-uronate ketol-isomerase 1</fullName>
        <ecNumber>5.3.1.17</ecNumber>
    </recommendedName>
    <alternativeName>
        <fullName>5-keto-4-deoxyuronate isomerase 1</fullName>
    </alternativeName>
    <alternativeName>
        <fullName>DKI isomerase 1</fullName>
    </alternativeName>
</protein>
<dbReference type="EC" id="5.3.1.17"/>
<dbReference type="EMBL" id="AE015928">
    <property type="protein sequence ID" value="AAO78337.1"/>
    <property type="molecule type" value="Genomic_DNA"/>
</dbReference>
<dbReference type="RefSeq" id="NP_812143.1">
    <property type="nucleotide sequence ID" value="NC_004663.1"/>
</dbReference>
<dbReference type="SMR" id="Q8A2S4"/>
<dbReference type="FunCoup" id="Q8A2S4">
    <property type="interactions" value="32"/>
</dbReference>
<dbReference type="STRING" id="226186.BT_3231"/>
<dbReference type="PaxDb" id="226186-BT_3231"/>
<dbReference type="EnsemblBacteria" id="AAO78337">
    <property type="protein sequence ID" value="AAO78337"/>
    <property type="gene ID" value="BT_3231"/>
</dbReference>
<dbReference type="KEGG" id="bth:BT_3231"/>
<dbReference type="PATRIC" id="fig|226186.12.peg.3292"/>
<dbReference type="eggNOG" id="COG3717">
    <property type="taxonomic scope" value="Bacteria"/>
</dbReference>
<dbReference type="HOGENOM" id="CLU_062609_0_0_10"/>
<dbReference type="InParanoid" id="Q8A2S4"/>
<dbReference type="OrthoDB" id="9770644at2"/>
<dbReference type="UniPathway" id="UPA00545">
    <property type="reaction ID" value="UER00826"/>
</dbReference>
<dbReference type="Proteomes" id="UP000001414">
    <property type="component" value="Chromosome"/>
</dbReference>
<dbReference type="GO" id="GO:0008697">
    <property type="term" value="F:4-deoxy-L-threo-5-hexosulose-uronate ketol-isomerase activity"/>
    <property type="evidence" value="ECO:0000318"/>
    <property type="project" value="GO_Central"/>
</dbReference>
<dbReference type="GO" id="GO:0046872">
    <property type="term" value="F:metal ion binding"/>
    <property type="evidence" value="ECO:0000318"/>
    <property type="project" value="GO_Central"/>
</dbReference>
<dbReference type="GO" id="GO:0008270">
    <property type="term" value="F:zinc ion binding"/>
    <property type="evidence" value="ECO:0007669"/>
    <property type="project" value="UniProtKB-UniRule"/>
</dbReference>
<dbReference type="GO" id="GO:0019698">
    <property type="term" value="P:D-galacturonate catabolic process"/>
    <property type="evidence" value="ECO:0000318"/>
    <property type="project" value="GO_Central"/>
</dbReference>
<dbReference type="GO" id="GO:0042840">
    <property type="term" value="P:D-glucuronate catabolic process"/>
    <property type="evidence" value="ECO:0000318"/>
    <property type="project" value="GO_Central"/>
</dbReference>
<dbReference type="GO" id="GO:0045490">
    <property type="term" value="P:pectin catabolic process"/>
    <property type="evidence" value="ECO:0007669"/>
    <property type="project" value="UniProtKB-UniRule"/>
</dbReference>
<dbReference type="CDD" id="cd20491">
    <property type="entry name" value="cupin_KduI_C"/>
    <property type="match status" value="1"/>
</dbReference>
<dbReference type="CDD" id="cd20294">
    <property type="entry name" value="cupin_KduI_N"/>
    <property type="match status" value="1"/>
</dbReference>
<dbReference type="FunFam" id="2.60.120.10:FF:000018">
    <property type="entry name" value="4-deoxy-L-threo-5-hexosulose-uronate ketol-isomerase"/>
    <property type="match status" value="1"/>
</dbReference>
<dbReference type="Gene3D" id="2.60.120.10">
    <property type="entry name" value="Jelly Rolls"/>
    <property type="match status" value="1"/>
</dbReference>
<dbReference type="Gene3D" id="2.60.120.520">
    <property type="entry name" value="pectin degrading enzyme 5-keto 4- deoxyuronate isomerase, domain 1"/>
    <property type="match status" value="1"/>
</dbReference>
<dbReference type="HAMAP" id="MF_00687">
    <property type="entry name" value="KduI"/>
    <property type="match status" value="1"/>
</dbReference>
<dbReference type="InterPro" id="IPR007045">
    <property type="entry name" value="KduI"/>
</dbReference>
<dbReference type="InterPro" id="IPR021120">
    <property type="entry name" value="KduI/IolB_isomerase"/>
</dbReference>
<dbReference type="InterPro" id="IPR027449">
    <property type="entry name" value="KduI_N"/>
</dbReference>
<dbReference type="InterPro" id="IPR014710">
    <property type="entry name" value="RmlC-like_jellyroll"/>
</dbReference>
<dbReference type="InterPro" id="IPR011051">
    <property type="entry name" value="RmlC_Cupin_sf"/>
</dbReference>
<dbReference type="NCBIfam" id="NF002091">
    <property type="entry name" value="PRK00924.1"/>
    <property type="match status" value="1"/>
</dbReference>
<dbReference type="PANTHER" id="PTHR38461">
    <property type="entry name" value="4-DEOXY-L-THREO-5-HEXOSULOSE-URONATE KETOL-ISOMERASE"/>
    <property type="match status" value="1"/>
</dbReference>
<dbReference type="PANTHER" id="PTHR38461:SF1">
    <property type="entry name" value="4-DEOXY-L-THREO-5-HEXOSULOSE-URONATE KETOL-ISOMERASE"/>
    <property type="match status" value="1"/>
</dbReference>
<dbReference type="Pfam" id="PF04962">
    <property type="entry name" value="KduI"/>
    <property type="match status" value="1"/>
</dbReference>
<dbReference type="PIRSF" id="PIRSF006625">
    <property type="entry name" value="KduI"/>
    <property type="match status" value="1"/>
</dbReference>
<dbReference type="SUPFAM" id="SSF51182">
    <property type="entry name" value="RmlC-like cupins"/>
    <property type="match status" value="1"/>
</dbReference>
<name>KDUI1_BACTN</name>
<reference key="1">
    <citation type="journal article" date="2003" name="Science">
        <title>A genomic view of the human-Bacteroides thetaiotaomicron symbiosis.</title>
        <authorList>
            <person name="Xu J."/>
            <person name="Bjursell M.K."/>
            <person name="Himrod J."/>
            <person name="Deng S."/>
            <person name="Carmichael L.K."/>
            <person name="Chiang H.C."/>
            <person name="Hooper L.V."/>
            <person name="Gordon J.I."/>
        </authorList>
    </citation>
    <scope>NUCLEOTIDE SEQUENCE [LARGE SCALE GENOMIC DNA]</scope>
    <source>
        <strain>ATCC 29148 / DSM 2079 / JCM 5827 / CCUG 10774 / NCTC 10582 / VPI-5482 / E50</strain>
    </source>
</reference>
<organism>
    <name type="scientific">Bacteroides thetaiotaomicron (strain ATCC 29148 / DSM 2079 / JCM 5827 / CCUG 10774 / NCTC 10582 / VPI-5482 / E50)</name>
    <dbReference type="NCBI Taxonomy" id="226186"/>
    <lineage>
        <taxon>Bacteria</taxon>
        <taxon>Pseudomonadati</taxon>
        <taxon>Bacteroidota</taxon>
        <taxon>Bacteroidia</taxon>
        <taxon>Bacteroidales</taxon>
        <taxon>Bacteroidaceae</taxon>
        <taxon>Bacteroides</taxon>
    </lineage>
</organism>
<keyword id="KW-0413">Isomerase</keyword>
<keyword id="KW-0479">Metal-binding</keyword>
<keyword id="KW-1185">Reference proteome</keyword>
<keyword id="KW-0862">Zinc</keyword>